<proteinExistence type="inferred from homology"/>
<evidence type="ECO:0000255" key="1">
    <source>
        <dbReference type="HAMAP-Rule" id="MF_00414"/>
    </source>
</evidence>
<protein>
    <recommendedName>
        <fullName evidence="1">Probable protein kinase UbiB</fullName>
        <ecNumber evidence="1">2.7.-.-</ecNumber>
    </recommendedName>
    <alternativeName>
        <fullName evidence="1">Ubiquinone biosynthesis protein UbiB</fullName>
    </alternativeName>
</protein>
<comment type="function">
    <text evidence="1">Is probably a protein kinase regulator of UbiI activity which is involved in aerobic coenzyme Q (ubiquinone) biosynthesis.</text>
</comment>
<comment type="pathway">
    <text>Cofactor biosynthesis; ubiquinone biosynthesis [regulation].</text>
</comment>
<comment type="subcellular location">
    <subcellularLocation>
        <location evidence="1">Cell inner membrane</location>
        <topology evidence="1">Multi-pass membrane protein</topology>
    </subcellularLocation>
</comment>
<comment type="similarity">
    <text evidence="1">Belongs to the ABC1 family. UbiB subfamily.</text>
</comment>
<keyword id="KW-0067">ATP-binding</keyword>
<keyword id="KW-0997">Cell inner membrane</keyword>
<keyword id="KW-1003">Cell membrane</keyword>
<keyword id="KW-0418">Kinase</keyword>
<keyword id="KW-0472">Membrane</keyword>
<keyword id="KW-0547">Nucleotide-binding</keyword>
<keyword id="KW-0808">Transferase</keyword>
<keyword id="KW-0812">Transmembrane</keyword>
<keyword id="KW-1133">Transmembrane helix</keyword>
<keyword id="KW-0831">Ubiquinone biosynthesis</keyword>
<sequence>MTPGEVRRLYFIIRTFLSYGLDELIPRMRLTLPLRLWRYSLFWMPNRHKDKLLGERLRLALQELGPVWIKFGQMLSTRRDLFPPQIADQLALLQDKVAPFDGRLAKAQIEEAMGGLPVEAWFDDFDIQPLASASIAQVHTARLKSNGKEVVIKVIRPDILPVIQADLKLIYRLARWVPRLLPDGRRLRPTEVVREYEKTLIDELNLLRESANAIQLRRNFENSPMLYIPEVYSDYCSQNMMVMERIYGIPVSDVAALEKNGTNMKLLAERGVKVFFTQVFRDSFFHADMHPGNIFVSHEHPENPQYIGIDCGIVGSLNKEDKRYLAENFIAFFNRDYRKVAELHVDSGWVPPDTNVEDFEFAIRTVCEPIFEKPLAEISFGHVLLNLFNTARRFNMEVQPQLVLLQKTLLYVEGVGRQLYPQLDLWKTAKPFLESWIKDQVGIPALTRALKEKAPFWVEKMPEIPELVYDSLRQGKYLQHSVDKIARELQVNHVRQSQSRYLLGIGATLLLSGSFLLVNRPEWGLMPGWLMVGGVVVWLVGWRKTR</sequence>
<organism>
    <name type="scientific">Salmonella dublin (strain CT_02021853)</name>
    <dbReference type="NCBI Taxonomy" id="439851"/>
    <lineage>
        <taxon>Bacteria</taxon>
        <taxon>Pseudomonadati</taxon>
        <taxon>Pseudomonadota</taxon>
        <taxon>Gammaproteobacteria</taxon>
        <taxon>Enterobacterales</taxon>
        <taxon>Enterobacteriaceae</taxon>
        <taxon>Salmonella</taxon>
    </lineage>
</organism>
<reference key="1">
    <citation type="journal article" date="2011" name="J. Bacteriol.">
        <title>Comparative genomics of 28 Salmonella enterica isolates: evidence for CRISPR-mediated adaptive sublineage evolution.</title>
        <authorList>
            <person name="Fricke W.F."/>
            <person name="Mammel M.K."/>
            <person name="McDermott P.F."/>
            <person name="Tartera C."/>
            <person name="White D.G."/>
            <person name="Leclerc J.E."/>
            <person name="Ravel J."/>
            <person name="Cebula T.A."/>
        </authorList>
    </citation>
    <scope>NUCLEOTIDE SEQUENCE [LARGE SCALE GENOMIC DNA]</scope>
    <source>
        <strain>CT_02021853</strain>
    </source>
</reference>
<gene>
    <name evidence="1" type="primary">ubiB</name>
    <name type="ordered locus">SeD_A4359</name>
</gene>
<feature type="chain" id="PRO_1000123917" description="Probable protein kinase UbiB">
    <location>
        <begin position="1"/>
        <end position="546"/>
    </location>
</feature>
<feature type="transmembrane region" description="Helical" evidence="1">
    <location>
        <begin position="501"/>
        <end position="521"/>
    </location>
</feature>
<feature type="transmembrane region" description="Helical" evidence="1">
    <location>
        <begin position="522"/>
        <end position="542"/>
    </location>
</feature>
<feature type="domain" description="Protein kinase" evidence="1">
    <location>
        <begin position="124"/>
        <end position="502"/>
    </location>
</feature>
<feature type="active site" description="Proton acceptor" evidence="1">
    <location>
        <position position="288"/>
    </location>
</feature>
<feature type="binding site" evidence="1">
    <location>
        <begin position="130"/>
        <end position="138"/>
    </location>
    <ligand>
        <name>ATP</name>
        <dbReference type="ChEBI" id="CHEBI:30616"/>
    </ligand>
</feature>
<feature type="binding site" evidence="1">
    <location>
        <position position="153"/>
    </location>
    <ligand>
        <name>ATP</name>
        <dbReference type="ChEBI" id="CHEBI:30616"/>
    </ligand>
</feature>
<accession>B5FNW8</accession>
<dbReference type="EC" id="2.7.-.-" evidence="1"/>
<dbReference type="EMBL" id="CP001144">
    <property type="protein sequence ID" value="ACH73633.1"/>
    <property type="molecule type" value="Genomic_DNA"/>
</dbReference>
<dbReference type="RefSeq" id="WP_000187559.1">
    <property type="nucleotide sequence ID" value="NC_011205.1"/>
</dbReference>
<dbReference type="SMR" id="B5FNW8"/>
<dbReference type="KEGG" id="sed:SeD_A4359"/>
<dbReference type="HOGENOM" id="CLU_006533_0_0_6"/>
<dbReference type="UniPathway" id="UPA00232"/>
<dbReference type="Proteomes" id="UP000008322">
    <property type="component" value="Chromosome"/>
</dbReference>
<dbReference type="GO" id="GO:0005886">
    <property type="term" value="C:plasma membrane"/>
    <property type="evidence" value="ECO:0007669"/>
    <property type="project" value="UniProtKB-SubCell"/>
</dbReference>
<dbReference type="GO" id="GO:0005524">
    <property type="term" value="F:ATP binding"/>
    <property type="evidence" value="ECO:0007669"/>
    <property type="project" value="UniProtKB-KW"/>
</dbReference>
<dbReference type="GO" id="GO:0004672">
    <property type="term" value="F:protein kinase activity"/>
    <property type="evidence" value="ECO:0007669"/>
    <property type="project" value="UniProtKB-UniRule"/>
</dbReference>
<dbReference type="GO" id="GO:0010795">
    <property type="term" value="P:regulation of ubiquinone biosynthetic process"/>
    <property type="evidence" value="ECO:0007669"/>
    <property type="project" value="UniProtKB-UniRule"/>
</dbReference>
<dbReference type="GO" id="GO:0006744">
    <property type="term" value="P:ubiquinone biosynthetic process"/>
    <property type="evidence" value="ECO:0007669"/>
    <property type="project" value="UniProtKB-UniPathway"/>
</dbReference>
<dbReference type="CDD" id="cd13972">
    <property type="entry name" value="UbiB"/>
    <property type="match status" value="1"/>
</dbReference>
<dbReference type="HAMAP" id="MF_00414">
    <property type="entry name" value="UbiB"/>
    <property type="match status" value="1"/>
</dbReference>
<dbReference type="InterPro" id="IPR004147">
    <property type="entry name" value="ABC1_dom"/>
</dbReference>
<dbReference type="InterPro" id="IPR011009">
    <property type="entry name" value="Kinase-like_dom_sf"/>
</dbReference>
<dbReference type="InterPro" id="IPR010232">
    <property type="entry name" value="UbiB"/>
</dbReference>
<dbReference type="InterPro" id="IPR045308">
    <property type="entry name" value="UbiB_bact"/>
</dbReference>
<dbReference type="InterPro" id="IPR050154">
    <property type="entry name" value="UbiB_kinase"/>
</dbReference>
<dbReference type="NCBIfam" id="NF003404">
    <property type="entry name" value="PRK04750.1"/>
    <property type="match status" value="1"/>
</dbReference>
<dbReference type="NCBIfam" id="TIGR01982">
    <property type="entry name" value="UbiB"/>
    <property type="match status" value="1"/>
</dbReference>
<dbReference type="PANTHER" id="PTHR10566">
    <property type="entry name" value="CHAPERONE-ACTIVITY OF BC1 COMPLEX CABC1 -RELATED"/>
    <property type="match status" value="1"/>
</dbReference>
<dbReference type="PANTHER" id="PTHR10566:SF113">
    <property type="entry name" value="PROTEIN ACTIVITY OF BC1 COMPLEX KINASE 7, CHLOROPLASTIC"/>
    <property type="match status" value="1"/>
</dbReference>
<dbReference type="Pfam" id="PF03109">
    <property type="entry name" value="ABC1"/>
    <property type="match status" value="1"/>
</dbReference>
<dbReference type="SUPFAM" id="SSF56112">
    <property type="entry name" value="Protein kinase-like (PK-like)"/>
    <property type="match status" value="1"/>
</dbReference>
<name>UBIB_SALDC</name>